<accession>A5CS51</accession>
<protein>
    <recommendedName>
        <fullName evidence="1">UDP-N-acetylglucosamine--N-acetylmuramyl-(pentapeptide) pyrophosphoryl-undecaprenol N-acetylglucosamine transferase</fullName>
        <ecNumber evidence="1">2.4.1.227</ecNumber>
    </recommendedName>
    <alternativeName>
        <fullName evidence="1">Undecaprenyl-PP-MurNAc-pentapeptide-UDPGlcNAc GlcNAc transferase</fullName>
    </alternativeName>
</protein>
<dbReference type="EC" id="2.4.1.227" evidence="1"/>
<dbReference type="EMBL" id="AM711867">
    <property type="protein sequence ID" value="CAN01915.1"/>
    <property type="molecule type" value="Genomic_DNA"/>
</dbReference>
<dbReference type="RefSeq" id="WP_012038546.1">
    <property type="nucleotide sequence ID" value="NC_009480.1"/>
</dbReference>
<dbReference type="SMR" id="A5CS51"/>
<dbReference type="CAZy" id="GT28">
    <property type="family name" value="Glycosyltransferase Family 28"/>
</dbReference>
<dbReference type="KEGG" id="cmi:CMM_1859"/>
<dbReference type="eggNOG" id="COG0707">
    <property type="taxonomic scope" value="Bacteria"/>
</dbReference>
<dbReference type="HOGENOM" id="CLU_037404_1_0_11"/>
<dbReference type="OrthoDB" id="9808936at2"/>
<dbReference type="UniPathway" id="UPA00219"/>
<dbReference type="Proteomes" id="UP000001564">
    <property type="component" value="Chromosome"/>
</dbReference>
<dbReference type="GO" id="GO:0005886">
    <property type="term" value="C:plasma membrane"/>
    <property type="evidence" value="ECO:0007669"/>
    <property type="project" value="UniProtKB-SubCell"/>
</dbReference>
<dbReference type="GO" id="GO:0051991">
    <property type="term" value="F:UDP-N-acetyl-D-glucosamine:N-acetylmuramoyl-L-alanyl-D-glutamyl-meso-2,6-diaminopimelyl-D-alanyl-D-alanine-diphosphoundecaprenol 4-beta-N-acetylglucosaminlytransferase activity"/>
    <property type="evidence" value="ECO:0007669"/>
    <property type="project" value="RHEA"/>
</dbReference>
<dbReference type="GO" id="GO:0050511">
    <property type="term" value="F:undecaprenyldiphospho-muramoylpentapeptide beta-N-acetylglucosaminyltransferase activity"/>
    <property type="evidence" value="ECO:0007669"/>
    <property type="project" value="UniProtKB-UniRule"/>
</dbReference>
<dbReference type="GO" id="GO:0005975">
    <property type="term" value="P:carbohydrate metabolic process"/>
    <property type="evidence" value="ECO:0007669"/>
    <property type="project" value="InterPro"/>
</dbReference>
<dbReference type="GO" id="GO:0051301">
    <property type="term" value="P:cell division"/>
    <property type="evidence" value="ECO:0007669"/>
    <property type="project" value="UniProtKB-KW"/>
</dbReference>
<dbReference type="GO" id="GO:0071555">
    <property type="term" value="P:cell wall organization"/>
    <property type="evidence" value="ECO:0007669"/>
    <property type="project" value="UniProtKB-KW"/>
</dbReference>
<dbReference type="GO" id="GO:0030259">
    <property type="term" value="P:lipid glycosylation"/>
    <property type="evidence" value="ECO:0007669"/>
    <property type="project" value="UniProtKB-UniRule"/>
</dbReference>
<dbReference type="GO" id="GO:0009252">
    <property type="term" value="P:peptidoglycan biosynthetic process"/>
    <property type="evidence" value="ECO:0007669"/>
    <property type="project" value="UniProtKB-UniRule"/>
</dbReference>
<dbReference type="GO" id="GO:0008360">
    <property type="term" value="P:regulation of cell shape"/>
    <property type="evidence" value="ECO:0007669"/>
    <property type="project" value="UniProtKB-KW"/>
</dbReference>
<dbReference type="CDD" id="cd03785">
    <property type="entry name" value="GT28_MurG"/>
    <property type="match status" value="1"/>
</dbReference>
<dbReference type="Gene3D" id="3.40.50.2000">
    <property type="entry name" value="Glycogen Phosphorylase B"/>
    <property type="match status" value="2"/>
</dbReference>
<dbReference type="HAMAP" id="MF_00033">
    <property type="entry name" value="MurG"/>
    <property type="match status" value="1"/>
</dbReference>
<dbReference type="InterPro" id="IPR006009">
    <property type="entry name" value="GlcNAc_MurG"/>
</dbReference>
<dbReference type="InterPro" id="IPR007235">
    <property type="entry name" value="Glyco_trans_28_C"/>
</dbReference>
<dbReference type="InterPro" id="IPR004276">
    <property type="entry name" value="GlycoTrans_28_N"/>
</dbReference>
<dbReference type="NCBIfam" id="TIGR01133">
    <property type="entry name" value="murG"/>
    <property type="match status" value="1"/>
</dbReference>
<dbReference type="PANTHER" id="PTHR21015:SF22">
    <property type="entry name" value="GLYCOSYLTRANSFERASE"/>
    <property type="match status" value="1"/>
</dbReference>
<dbReference type="PANTHER" id="PTHR21015">
    <property type="entry name" value="UDP-N-ACETYLGLUCOSAMINE--N-ACETYLMURAMYL-(PENTAPEPTIDE) PYROPHOSPHORYL-UNDECAPRENOL N-ACETYLGLUCOSAMINE TRANSFERASE 1"/>
    <property type="match status" value="1"/>
</dbReference>
<dbReference type="Pfam" id="PF04101">
    <property type="entry name" value="Glyco_tran_28_C"/>
    <property type="match status" value="1"/>
</dbReference>
<dbReference type="Pfam" id="PF03033">
    <property type="entry name" value="Glyco_transf_28"/>
    <property type="match status" value="1"/>
</dbReference>
<dbReference type="SUPFAM" id="SSF53756">
    <property type="entry name" value="UDP-Glycosyltransferase/glycogen phosphorylase"/>
    <property type="match status" value="1"/>
</dbReference>
<proteinExistence type="inferred from homology"/>
<comment type="function">
    <text evidence="1">Cell wall formation. Catalyzes the transfer of a GlcNAc subunit on undecaprenyl-pyrophosphoryl-MurNAc-pentapeptide (lipid intermediate I) to form undecaprenyl-pyrophosphoryl-MurNAc-(pentapeptide)GlcNAc (lipid intermediate II).</text>
</comment>
<comment type="catalytic activity">
    <reaction evidence="1">
        <text>di-trans,octa-cis-undecaprenyl diphospho-N-acetyl-alpha-D-muramoyl-L-alanyl-D-glutamyl-meso-2,6-diaminopimeloyl-D-alanyl-D-alanine + UDP-N-acetyl-alpha-D-glucosamine = di-trans,octa-cis-undecaprenyl diphospho-[N-acetyl-alpha-D-glucosaminyl-(1-&gt;4)]-N-acetyl-alpha-D-muramoyl-L-alanyl-D-glutamyl-meso-2,6-diaminopimeloyl-D-alanyl-D-alanine + UDP + H(+)</text>
        <dbReference type="Rhea" id="RHEA:31227"/>
        <dbReference type="ChEBI" id="CHEBI:15378"/>
        <dbReference type="ChEBI" id="CHEBI:57705"/>
        <dbReference type="ChEBI" id="CHEBI:58223"/>
        <dbReference type="ChEBI" id="CHEBI:61387"/>
        <dbReference type="ChEBI" id="CHEBI:61388"/>
        <dbReference type="EC" id="2.4.1.227"/>
    </reaction>
</comment>
<comment type="pathway">
    <text evidence="1">Cell wall biogenesis; peptidoglycan biosynthesis.</text>
</comment>
<comment type="subcellular location">
    <subcellularLocation>
        <location evidence="1">Cell membrane</location>
        <topology evidence="1">Peripheral membrane protein</topology>
        <orientation evidence="1">Cytoplasmic side</orientation>
    </subcellularLocation>
</comment>
<comment type="similarity">
    <text evidence="1">Belongs to the glycosyltransferase 28 family. MurG subfamily.</text>
</comment>
<keyword id="KW-0131">Cell cycle</keyword>
<keyword id="KW-0132">Cell division</keyword>
<keyword id="KW-1003">Cell membrane</keyword>
<keyword id="KW-0133">Cell shape</keyword>
<keyword id="KW-0961">Cell wall biogenesis/degradation</keyword>
<keyword id="KW-0328">Glycosyltransferase</keyword>
<keyword id="KW-0472">Membrane</keyword>
<keyword id="KW-0573">Peptidoglycan synthesis</keyword>
<keyword id="KW-0808">Transferase</keyword>
<name>MURG_CLAM3</name>
<feature type="chain" id="PRO_1000002632" description="UDP-N-acetylglucosamine--N-acetylmuramyl-(pentapeptide) pyrophosphoryl-undecaprenol N-acetylglucosamine transferase">
    <location>
        <begin position="1"/>
        <end position="367"/>
    </location>
</feature>
<feature type="binding site" evidence="1">
    <location>
        <begin position="11"/>
        <end position="13"/>
    </location>
    <ligand>
        <name>UDP-N-acetyl-alpha-D-glucosamine</name>
        <dbReference type="ChEBI" id="CHEBI:57705"/>
    </ligand>
</feature>
<feature type="binding site" evidence="1">
    <location>
        <position position="125"/>
    </location>
    <ligand>
        <name>UDP-N-acetyl-alpha-D-glucosamine</name>
        <dbReference type="ChEBI" id="CHEBI:57705"/>
    </ligand>
</feature>
<feature type="binding site" evidence="1">
    <location>
        <position position="163"/>
    </location>
    <ligand>
        <name>UDP-N-acetyl-alpha-D-glucosamine</name>
        <dbReference type="ChEBI" id="CHEBI:57705"/>
    </ligand>
</feature>
<feature type="binding site" evidence="1">
    <location>
        <position position="197"/>
    </location>
    <ligand>
        <name>UDP-N-acetyl-alpha-D-glucosamine</name>
        <dbReference type="ChEBI" id="CHEBI:57705"/>
    </ligand>
</feature>
<feature type="binding site" evidence="1">
    <location>
        <position position="289"/>
    </location>
    <ligand>
        <name>UDP-N-acetyl-alpha-D-glucosamine</name>
        <dbReference type="ChEBI" id="CHEBI:57705"/>
    </ligand>
</feature>
<gene>
    <name evidence="1" type="primary">murG</name>
    <name type="ordered locus">CMM_1859</name>
</gene>
<organism>
    <name type="scientific">Clavibacter michiganensis subsp. michiganensis (strain NCPPB 382)</name>
    <dbReference type="NCBI Taxonomy" id="443906"/>
    <lineage>
        <taxon>Bacteria</taxon>
        <taxon>Bacillati</taxon>
        <taxon>Actinomycetota</taxon>
        <taxon>Actinomycetes</taxon>
        <taxon>Micrococcales</taxon>
        <taxon>Microbacteriaceae</taxon>
        <taxon>Clavibacter</taxon>
    </lineage>
</organism>
<sequence>MTVYLLAGGGTAGHVNPLLAVADELRAREPGSTILVLGTREGLESRLVPARGYELLTIARLPFPRRPDGAAVRFAPAFARAVGQIRRMIAERGIDVVVGFGGYAAAPAYAAARRPGVPVVVHEANASPGLANRLGARVAAAVGITFPGTALGPRAEVVGMPLRREIATLDRAAVRDAARAELGLDADRPTLLVTGGSTGARSLNRTVVQVAERITATGAQILHIVGGAQEFTDPGVERYHVVGYSDRMELAIAAADLVVSRAGAGALSELTAVGVPAVYVPYPVGNGEQAVNVRGVVAAGGGIVVADADFTPDWVLAHVLPLLSDPAALARMSQAAASVGTRDGAARMADLVRDAVAARPSRPAARR</sequence>
<evidence type="ECO:0000255" key="1">
    <source>
        <dbReference type="HAMAP-Rule" id="MF_00033"/>
    </source>
</evidence>
<reference key="1">
    <citation type="journal article" date="2008" name="J. Bacteriol.">
        <title>The genome sequence of the tomato-pathogenic actinomycete Clavibacter michiganensis subsp. michiganensis NCPPB382 reveals a large island involved in pathogenicity.</title>
        <authorList>
            <person name="Gartemann K.-H."/>
            <person name="Abt B."/>
            <person name="Bekel T."/>
            <person name="Burger A."/>
            <person name="Engemann J."/>
            <person name="Fluegel M."/>
            <person name="Gaigalat L."/>
            <person name="Goesmann A."/>
            <person name="Graefen I."/>
            <person name="Kalinowski J."/>
            <person name="Kaup O."/>
            <person name="Kirchner O."/>
            <person name="Krause L."/>
            <person name="Linke B."/>
            <person name="McHardy A."/>
            <person name="Meyer F."/>
            <person name="Pohle S."/>
            <person name="Rueckert C."/>
            <person name="Schneiker S."/>
            <person name="Zellermann E.-M."/>
            <person name="Puehler A."/>
            <person name="Eichenlaub R."/>
            <person name="Kaiser O."/>
            <person name="Bartels D."/>
        </authorList>
    </citation>
    <scope>NUCLEOTIDE SEQUENCE [LARGE SCALE GENOMIC DNA]</scope>
    <source>
        <strain>NCPPB 382</strain>
    </source>
</reference>